<keyword id="KW-0539">Nucleus</keyword>
<keyword id="KW-1185">Reference proteome</keyword>
<comment type="subcellular location">
    <subcellularLocation>
        <location evidence="1">Nucleus</location>
        <location evidence="1">Nucleolus</location>
    </subcellularLocation>
</comment>
<comment type="similarity">
    <text evidence="4">Belongs to the RPF2 family.</text>
</comment>
<proteinExistence type="evidence at transcript level"/>
<accession>Q9AWM9</accession>
<accession>Q0JMC9</accession>
<name>RPF2_ORYSJ</name>
<feature type="chain" id="PRO_0000120228" description="Ribosome production factor 2 homolog">
    <location>
        <begin position="1"/>
        <end position="310"/>
    </location>
</feature>
<feature type="domain" description="Brix" evidence="2">
    <location>
        <begin position="29"/>
        <end position="239"/>
    </location>
</feature>
<feature type="region of interest" description="Disordered" evidence="3">
    <location>
        <begin position="281"/>
        <end position="310"/>
    </location>
</feature>
<feature type="compositionally biased region" description="Basic residues" evidence="3">
    <location>
        <begin position="295"/>
        <end position="310"/>
    </location>
</feature>
<reference key="1">
    <citation type="journal article" date="2002" name="Nature">
        <title>The genome sequence and structure of rice chromosome 1.</title>
        <authorList>
            <person name="Sasaki T."/>
            <person name="Matsumoto T."/>
            <person name="Yamamoto K."/>
            <person name="Sakata K."/>
            <person name="Baba T."/>
            <person name="Katayose Y."/>
            <person name="Wu J."/>
            <person name="Niimura Y."/>
            <person name="Cheng Z."/>
            <person name="Nagamura Y."/>
            <person name="Antonio B.A."/>
            <person name="Kanamori H."/>
            <person name="Hosokawa S."/>
            <person name="Masukawa M."/>
            <person name="Arikawa K."/>
            <person name="Chiden Y."/>
            <person name="Hayashi M."/>
            <person name="Okamoto M."/>
            <person name="Ando T."/>
            <person name="Aoki H."/>
            <person name="Arita K."/>
            <person name="Hamada M."/>
            <person name="Harada C."/>
            <person name="Hijishita S."/>
            <person name="Honda M."/>
            <person name="Ichikawa Y."/>
            <person name="Idonuma A."/>
            <person name="Iijima M."/>
            <person name="Ikeda M."/>
            <person name="Ikeno M."/>
            <person name="Ito S."/>
            <person name="Ito T."/>
            <person name="Ito Y."/>
            <person name="Ito Y."/>
            <person name="Iwabuchi A."/>
            <person name="Kamiya K."/>
            <person name="Karasawa W."/>
            <person name="Katagiri S."/>
            <person name="Kikuta A."/>
            <person name="Kobayashi N."/>
            <person name="Kono I."/>
            <person name="Machita K."/>
            <person name="Maehara T."/>
            <person name="Mizuno H."/>
            <person name="Mizubayashi T."/>
            <person name="Mukai Y."/>
            <person name="Nagasaki H."/>
            <person name="Nakashima M."/>
            <person name="Nakama Y."/>
            <person name="Nakamichi Y."/>
            <person name="Nakamura M."/>
            <person name="Namiki N."/>
            <person name="Negishi M."/>
            <person name="Ohta I."/>
            <person name="Ono N."/>
            <person name="Saji S."/>
            <person name="Sakai K."/>
            <person name="Shibata M."/>
            <person name="Shimokawa T."/>
            <person name="Shomura A."/>
            <person name="Song J."/>
            <person name="Takazaki Y."/>
            <person name="Terasawa K."/>
            <person name="Tsuji K."/>
            <person name="Waki K."/>
            <person name="Yamagata H."/>
            <person name="Yamane H."/>
            <person name="Yoshiki S."/>
            <person name="Yoshihara R."/>
            <person name="Yukawa K."/>
            <person name="Zhong H."/>
            <person name="Iwama H."/>
            <person name="Endo T."/>
            <person name="Ito H."/>
            <person name="Hahn J.H."/>
            <person name="Kim H.-I."/>
            <person name="Eun M.-Y."/>
            <person name="Yano M."/>
            <person name="Jiang J."/>
            <person name="Gojobori T."/>
        </authorList>
    </citation>
    <scope>NUCLEOTIDE SEQUENCE [LARGE SCALE GENOMIC DNA]</scope>
    <source>
        <strain>cv. Nipponbare</strain>
    </source>
</reference>
<reference key="2">
    <citation type="journal article" date="2005" name="Nature">
        <title>The map-based sequence of the rice genome.</title>
        <authorList>
            <consortium name="International rice genome sequencing project (IRGSP)"/>
        </authorList>
    </citation>
    <scope>NUCLEOTIDE SEQUENCE [LARGE SCALE GENOMIC DNA]</scope>
    <source>
        <strain>cv. Nipponbare</strain>
    </source>
</reference>
<reference key="3">
    <citation type="journal article" date="2008" name="Nucleic Acids Res.">
        <title>The rice annotation project database (RAP-DB): 2008 update.</title>
        <authorList>
            <consortium name="The rice annotation project (RAP)"/>
        </authorList>
    </citation>
    <scope>GENOME REANNOTATION</scope>
    <source>
        <strain>cv. Nipponbare</strain>
    </source>
</reference>
<reference key="4">
    <citation type="journal article" date="2013" name="Rice">
        <title>Improvement of the Oryza sativa Nipponbare reference genome using next generation sequence and optical map data.</title>
        <authorList>
            <person name="Kawahara Y."/>
            <person name="de la Bastide M."/>
            <person name="Hamilton J.P."/>
            <person name="Kanamori H."/>
            <person name="McCombie W.R."/>
            <person name="Ouyang S."/>
            <person name="Schwartz D.C."/>
            <person name="Tanaka T."/>
            <person name="Wu J."/>
            <person name="Zhou S."/>
            <person name="Childs K.L."/>
            <person name="Davidson R.M."/>
            <person name="Lin H."/>
            <person name="Quesada-Ocampo L."/>
            <person name="Vaillancourt B."/>
            <person name="Sakai H."/>
            <person name="Lee S.S."/>
            <person name="Kim J."/>
            <person name="Numa H."/>
            <person name="Itoh T."/>
            <person name="Buell C.R."/>
            <person name="Matsumoto T."/>
        </authorList>
    </citation>
    <scope>GENOME REANNOTATION</scope>
    <source>
        <strain>cv. Nipponbare</strain>
    </source>
</reference>
<reference key="5">
    <citation type="journal article" date="2005" name="PLoS Biol.">
        <title>The genomes of Oryza sativa: a history of duplications.</title>
        <authorList>
            <person name="Yu J."/>
            <person name="Wang J."/>
            <person name="Lin W."/>
            <person name="Li S."/>
            <person name="Li H."/>
            <person name="Zhou J."/>
            <person name="Ni P."/>
            <person name="Dong W."/>
            <person name="Hu S."/>
            <person name="Zeng C."/>
            <person name="Zhang J."/>
            <person name="Zhang Y."/>
            <person name="Li R."/>
            <person name="Xu Z."/>
            <person name="Li S."/>
            <person name="Li X."/>
            <person name="Zheng H."/>
            <person name="Cong L."/>
            <person name="Lin L."/>
            <person name="Yin J."/>
            <person name="Geng J."/>
            <person name="Li G."/>
            <person name="Shi J."/>
            <person name="Liu J."/>
            <person name="Lv H."/>
            <person name="Li J."/>
            <person name="Wang J."/>
            <person name="Deng Y."/>
            <person name="Ran L."/>
            <person name="Shi X."/>
            <person name="Wang X."/>
            <person name="Wu Q."/>
            <person name="Li C."/>
            <person name="Ren X."/>
            <person name="Wang J."/>
            <person name="Wang X."/>
            <person name="Li D."/>
            <person name="Liu D."/>
            <person name="Zhang X."/>
            <person name="Ji Z."/>
            <person name="Zhao W."/>
            <person name="Sun Y."/>
            <person name="Zhang Z."/>
            <person name="Bao J."/>
            <person name="Han Y."/>
            <person name="Dong L."/>
            <person name="Ji J."/>
            <person name="Chen P."/>
            <person name="Wu S."/>
            <person name="Liu J."/>
            <person name="Xiao Y."/>
            <person name="Bu D."/>
            <person name="Tan J."/>
            <person name="Yang L."/>
            <person name="Ye C."/>
            <person name="Zhang J."/>
            <person name="Xu J."/>
            <person name="Zhou Y."/>
            <person name="Yu Y."/>
            <person name="Zhang B."/>
            <person name="Zhuang S."/>
            <person name="Wei H."/>
            <person name="Liu B."/>
            <person name="Lei M."/>
            <person name="Yu H."/>
            <person name="Li Y."/>
            <person name="Xu H."/>
            <person name="Wei S."/>
            <person name="He X."/>
            <person name="Fang L."/>
            <person name="Zhang Z."/>
            <person name="Zhang Y."/>
            <person name="Huang X."/>
            <person name="Su Z."/>
            <person name="Tong W."/>
            <person name="Li J."/>
            <person name="Tong Z."/>
            <person name="Li S."/>
            <person name="Ye J."/>
            <person name="Wang L."/>
            <person name="Fang L."/>
            <person name="Lei T."/>
            <person name="Chen C.-S."/>
            <person name="Chen H.-C."/>
            <person name="Xu Z."/>
            <person name="Li H."/>
            <person name="Huang H."/>
            <person name="Zhang F."/>
            <person name="Xu H."/>
            <person name="Li N."/>
            <person name="Zhao C."/>
            <person name="Li S."/>
            <person name="Dong L."/>
            <person name="Huang Y."/>
            <person name="Li L."/>
            <person name="Xi Y."/>
            <person name="Qi Q."/>
            <person name="Li W."/>
            <person name="Zhang B."/>
            <person name="Hu W."/>
            <person name="Zhang Y."/>
            <person name="Tian X."/>
            <person name="Jiao Y."/>
            <person name="Liang X."/>
            <person name="Jin J."/>
            <person name="Gao L."/>
            <person name="Zheng W."/>
            <person name="Hao B."/>
            <person name="Liu S.-M."/>
            <person name="Wang W."/>
            <person name="Yuan L."/>
            <person name="Cao M."/>
            <person name="McDermott J."/>
            <person name="Samudrala R."/>
            <person name="Wang J."/>
            <person name="Wong G.K.-S."/>
            <person name="Yang H."/>
        </authorList>
    </citation>
    <scope>NUCLEOTIDE SEQUENCE [LARGE SCALE GENOMIC DNA]</scope>
    <source>
        <strain>cv. Nipponbare</strain>
    </source>
</reference>
<reference key="6">
    <citation type="journal article" date="2003" name="Science">
        <title>Collection, mapping, and annotation of over 28,000 cDNA clones from japonica rice.</title>
        <authorList>
            <consortium name="The rice full-length cDNA consortium"/>
        </authorList>
    </citation>
    <scope>NUCLEOTIDE SEQUENCE [LARGE SCALE MRNA]</scope>
    <source>
        <strain>cv. Nipponbare</strain>
    </source>
</reference>
<protein>
    <recommendedName>
        <fullName>Ribosome production factor 2 homolog</fullName>
    </recommendedName>
    <alternativeName>
        <fullName>Brix domain-containing protein 1 homolog</fullName>
    </alternativeName>
    <alternativeName>
        <fullName>Ribosome biogenesis protein RPF2 homolog</fullName>
    </alternativeName>
</protein>
<organism>
    <name type="scientific">Oryza sativa subsp. japonica</name>
    <name type="common">Rice</name>
    <dbReference type="NCBI Taxonomy" id="39947"/>
    <lineage>
        <taxon>Eukaryota</taxon>
        <taxon>Viridiplantae</taxon>
        <taxon>Streptophyta</taxon>
        <taxon>Embryophyta</taxon>
        <taxon>Tracheophyta</taxon>
        <taxon>Spermatophyta</taxon>
        <taxon>Magnoliopsida</taxon>
        <taxon>Liliopsida</taxon>
        <taxon>Poales</taxon>
        <taxon>Poaceae</taxon>
        <taxon>BOP clade</taxon>
        <taxon>Oryzoideae</taxon>
        <taxon>Oryzeae</taxon>
        <taxon>Oryzinae</taxon>
        <taxon>Oryza</taxon>
        <taxon>Oryza sativa</taxon>
    </lineage>
</organism>
<sequence length="310" mass="35214">MVAAIRVPRSQRAKRELLKHAPKLVETGKKTLILHGTKTSAVLNSVLADLFHLKRDNAVKYSKKNDNIRPFESGGETSLEFFSLKTDCSLIVYGSHSKKRPNNLVLGRTYDHHIYDLVEVGVENYKSIESYVYDKKLAPKLGSKPFFAFIGEHFESVEELKHLKEVLLDLFKGEVVENLNLAGVDRVFVCTAISPTTVYMMHCALRLKRSGTSIPRIELVEVGPSMDLVVRRHRYPVESLKKEAMKTADHAKKMKNVTKDPVHGKLGKVYIPDQQIAKMSLSNDVKGLKRERREAKKNKDHSKKQKINPE</sequence>
<dbReference type="EMBL" id="AP002970">
    <property type="protein sequence ID" value="BAB32971.1"/>
    <property type="molecule type" value="Genomic_DNA"/>
</dbReference>
<dbReference type="EMBL" id="AP008207">
    <property type="protein sequence ID" value="BAF05099.1"/>
    <property type="molecule type" value="Genomic_DNA"/>
</dbReference>
<dbReference type="EMBL" id="AP014957">
    <property type="protein sequence ID" value="BAS72401.1"/>
    <property type="molecule type" value="Genomic_DNA"/>
</dbReference>
<dbReference type="EMBL" id="CM000138">
    <property type="protein sequence ID" value="EAZ12108.1"/>
    <property type="molecule type" value="Genomic_DNA"/>
</dbReference>
<dbReference type="EMBL" id="AK100776">
    <property type="protein sequence ID" value="BAG94760.1"/>
    <property type="molecule type" value="mRNA"/>
</dbReference>
<dbReference type="RefSeq" id="XP_015623130.1">
    <property type="nucleotide sequence ID" value="XM_015767644.1"/>
</dbReference>
<dbReference type="SMR" id="Q9AWM9"/>
<dbReference type="FunCoup" id="Q9AWM9">
    <property type="interactions" value="2072"/>
</dbReference>
<dbReference type="STRING" id="39947.Q9AWM9"/>
<dbReference type="PaxDb" id="39947-Q9AWM9"/>
<dbReference type="EnsemblPlants" id="Os01t0513800-01">
    <property type="protein sequence ID" value="Os01t0513800-01"/>
    <property type="gene ID" value="Os01g0513800"/>
</dbReference>
<dbReference type="Gramene" id="Os01t0513800-01">
    <property type="protein sequence ID" value="Os01t0513800-01"/>
    <property type="gene ID" value="Os01g0513800"/>
</dbReference>
<dbReference type="KEGG" id="dosa:Os01g0513800"/>
<dbReference type="eggNOG" id="KOG3031">
    <property type="taxonomic scope" value="Eukaryota"/>
</dbReference>
<dbReference type="HOGENOM" id="CLU_049783_1_0_1"/>
<dbReference type="InParanoid" id="Q9AWM9"/>
<dbReference type="OMA" id="VGLKPMF"/>
<dbReference type="OrthoDB" id="407658at2759"/>
<dbReference type="Proteomes" id="UP000000763">
    <property type="component" value="Chromosome 1"/>
</dbReference>
<dbReference type="Proteomes" id="UP000007752">
    <property type="component" value="Chromosome 1"/>
</dbReference>
<dbReference type="Proteomes" id="UP000059680">
    <property type="component" value="Chromosome 1"/>
</dbReference>
<dbReference type="GO" id="GO:0005730">
    <property type="term" value="C:nucleolus"/>
    <property type="evidence" value="ECO:0000318"/>
    <property type="project" value="GO_Central"/>
</dbReference>
<dbReference type="GO" id="GO:0019843">
    <property type="term" value="F:rRNA binding"/>
    <property type="evidence" value="ECO:0000318"/>
    <property type="project" value="GO_Central"/>
</dbReference>
<dbReference type="GO" id="GO:0000463">
    <property type="term" value="P:maturation of LSU-rRNA from tricistronic rRNA transcript (SSU-rRNA, 5.8S rRNA, LSU-rRNA)"/>
    <property type="evidence" value="ECO:0000318"/>
    <property type="project" value="GO_Central"/>
</dbReference>
<dbReference type="GO" id="GO:0000027">
    <property type="term" value="P:ribosomal large subunit assembly"/>
    <property type="evidence" value="ECO:0007669"/>
    <property type="project" value="InterPro"/>
</dbReference>
<dbReference type="InterPro" id="IPR007109">
    <property type="entry name" value="Brix"/>
</dbReference>
<dbReference type="InterPro" id="IPR039770">
    <property type="entry name" value="Rpf2"/>
</dbReference>
<dbReference type="PANTHER" id="PTHR12728">
    <property type="entry name" value="BRIX DOMAIN CONTAINING PROTEIN"/>
    <property type="match status" value="1"/>
</dbReference>
<dbReference type="PANTHER" id="PTHR12728:SF0">
    <property type="entry name" value="RIBOSOME PRODUCTION FACTOR 2 HOMOLOG"/>
    <property type="match status" value="1"/>
</dbReference>
<dbReference type="Pfam" id="PF04427">
    <property type="entry name" value="Brix"/>
    <property type="match status" value="1"/>
</dbReference>
<dbReference type="SMART" id="SM00879">
    <property type="entry name" value="Brix"/>
    <property type="match status" value="1"/>
</dbReference>
<dbReference type="PROSITE" id="PS50833">
    <property type="entry name" value="BRIX"/>
    <property type="match status" value="1"/>
</dbReference>
<gene>
    <name type="ordered locus">Os01g0513800</name>
    <name type="ordered locus">LOC_Os01g33030</name>
    <name evidence="5" type="ORF">OsJ_01990</name>
    <name type="ORF">P0504D03.20</name>
</gene>
<evidence type="ECO:0000250" key="1"/>
<evidence type="ECO:0000255" key="2">
    <source>
        <dbReference type="PROSITE-ProRule" id="PRU00034"/>
    </source>
</evidence>
<evidence type="ECO:0000256" key="3">
    <source>
        <dbReference type="SAM" id="MobiDB-lite"/>
    </source>
</evidence>
<evidence type="ECO:0000305" key="4"/>
<evidence type="ECO:0000312" key="5">
    <source>
        <dbReference type="EMBL" id="EAZ12108.1"/>
    </source>
</evidence>